<protein>
    <recommendedName>
        <fullName>Apoptosis regulator Bcl-2</fullName>
    </recommendedName>
</protein>
<accession>Q9JJV8</accession>
<reference key="1">
    <citation type="journal article" date="2000" name="Biochem. Biophys. Res. Commun.">
        <title>Cloning and functional analysis of cDNA encoding the hamster Bcl-2 protein.</title>
        <authorList>
            <person name="Tomicic M.T."/>
            <person name="Christmann M."/>
            <person name="Kaina B."/>
        </authorList>
    </citation>
    <scope>NUCLEOTIDE SEQUENCE [MRNA]</scope>
    <source>
        <tissue>Ovary</tissue>
    </source>
</reference>
<reference key="2">
    <citation type="journal article" date="2001" name="Biochem. Biophys. Res. Commun.">
        <title>Hamster Bcl-2 protein is cleaved in vitro and in cells by caspase-9 and caspase-3.</title>
        <authorList>
            <person name="Tomicic M.T."/>
            <person name="Kaina B."/>
        </authorList>
    </citation>
    <scope>NUCLEOTIDE SEQUENCE [MRNA]</scope>
    <scope>CLEAVAGE BY CASPASES</scope>
</reference>
<proteinExistence type="evidence at protein level"/>
<organism>
    <name type="scientific">Cricetulus griseus</name>
    <name type="common">Chinese hamster</name>
    <name type="synonym">Cricetulus barabensis griseus</name>
    <dbReference type="NCBI Taxonomy" id="10029"/>
    <lineage>
        <taxon>Eukaryota</taxon>
        <taxon>Metazoa</taxon>
        <taxon>Chordata</taxon>
        <taxon>Craniata</taxon>
        <taxon>Vertebrata</taxon>
        <taxon>Euteleostomi</taxon>
        <taxon>Mammalia</taxon>
        <taxon>Eutheria</taxon>
        <taxon>Euarchontoglires</taxon>
        <taxon>Glires</taxon>
        <taxon>Rodentia</taxon>
        <taxon>Myomorpha</taxon>
        <taxon>Muroidea</taxon>
        <taxon>Cricetidae</taxon>
        <taxon>Cricetinae</taxon>
        <taxon>Cricetulus</taxon>
    </lineage>
</organism>
<comment type="function">
    <text evidence="2">Suppresses apoptosis in a variety of cell systems including factor-dependent lymphohematopoietic and neural cells. Regulates cell death by controlling the mitochondrial membrane permeability. Appears to function in a feedback loop system with caspases. Inhibits caspase activity either by preventing the release of cytochrome c from the mitochondria and/or by binding to the apoptosis-activating factor (APAF-1). Also acts as an inhibitor of autophagy: interacts with BECN1 and AMBRA1 during non-starvation conditions and inhibits their autophagy function. May attenuate inflammation by impairing NLRP1-inflammasome activation, hence CASP1 activation and IL1B release.</text>
</comment>
<comment type="subunit">
    <text evidence="2 3">Forms homodimers, and heterodimers with BAX, BAD, BAK and Bcl-X(L). Heterodimerization with BAX requires intact BH1 and BH2 motifs, and is necessary for anti-apoptotic activity (By similarity). Component of the complex, at least composed of LRPPRC, BECN1 and BCL2; the interactions prevent BECN1 from forming an autophagy-inducing complex with PIK3C3 (By similarity). Interacts with EI24 (By similarity). Also interacts with APAF1, BBC3, BCL2L1, BNIPL, MRPL41 and TP53BP2. Binding to FKBP8 seems to target BCL2 to the mitochondria and probably interferes with the binding of BCL2 to its targets. Interacts with BAG1 in an ATP-dependent manner. Interacts with RAF1 (the 'Ser-338' and 'Ser-339' phosphorylated form). Interacts (via the BH4 domain) with EGLN3; the interaction prevents the formation of the BAX-BCL2 complex and inhibits the anti-apoptotic activity of BCL2. Interacts with G0S2; this interaction also prevents the formation of the anti-apoptotic BAX-BCL2 complex. Interacts with RTL10/BOP. Interacts with the SCF(FBXO10) complex. Interacts (via the loop between motifs BH4 and BH3) with NLRP1 (via LRR repeats), but not with NLRP2, NLRP3, NLRP4, PYCARD, nor MEFV (By similarity). Interacts with GIMAP3/IAN4, GIMAP4/IAN1 and GIMAP5/IAN5 (By similarity). Interacts with BCAP31. Interacts with IRF3; the interaction is inhibited by Sendai virus infection. Interacts with BECN1; thereby inhibiting autophagy in non-starvation conditions. Interacts with AMBRA1; thereby inhibiting autophagy (By similarity).</text>
</comment>
<comment type="subcellular location">
    <subcellularLocation>
        <location evidence="2">Mitochondrion outer membrane</location>
        <topology evidence="4">Single-pass membrane protein</topology>
    </subcellularLocation>
    <subcellularLocation>
        <location evidence="2">Nucleus membrane</location>
        <topology evidence="4">Single-pass membrane protein</topology>
    </subcellularLocation>
    <subcellularLocation>
        <location evidence="2">Endoplasmic reticulum membrane</location>
        <topology evidence="4">Single-pass membrane protein</topology>
    </subcellularLocation>
    <subcellularLocation>
        <location evidence="3">Cytoplasm</location>
    </subcellularLocation>
</comment>
<comment type="domain">
    <text evidence="1">The BH4 motif is required for anti-apoptotic activity and for interaction with RAF1 and EGLN3.</text>
</comment>
<comment type="domain">
    <text evidence="2">BH1 and BH2 domains are required for the interaction with BAX and for anti-apoptotic activity.</text>
</comment>
<comment type="domain">
    <text evidence="2">The loop between motifs BH4 and BH3 is required for the interaction with NLRP1.</text>
</comment>
<comment type="domain">
    <text evidence="2">The BH3 motif is required for XIAP-mediated ubiquitination and subsequent induction of apoptosis.</text>
</comment>
<comment type="PTM">
    <text evidence="2 3">Phosphorylation/dephosphorylation on Ser-70 regulates anti-apoptotic activity. Growth factor-stimulated phosphorylation on Ser-70 by PKC is required for the anti-apoptosis activity and occurs during the G2/M phase of the cell cycle (By similarity). In the absence of growth factors, BCL2 appears to be phosphorylated by other protein kinases such as ERKs and stress-activated kinases (By similarity). Phosphorylated by MAPK8/JNK1 at Thr-69, Ser-70 and Ser-84, which stimulates starvation-induced autophagy (By similarity). Dephosphorylated by protein phosphatase 2A (PP2A) (By similarity).</text>
</comment>
<comment type="PTM">
    <text evidence="5">Proteolytically cleaved by caspases during apoptosis. The cleaved protein, lacking the BH4 motif, has pro-apoptotic activity, causes the release of cytochrome c into the cytosol promoting further caspase activity.</text>
</comment>
<comment type="PTM">
    <text evidence="2">Monoubiquitinated by PRKN, leading to an increase in its stability. Ubiquitinated by SCF(FBXO10), leading to its degradation by the proteasome.</text>
</comment>
<comment type="similarity">
    <text evidence="6">Belongs to the Bcl-2 family.</text>
</comment>
<sequence length="236" mass="26491">MAQAGRTGYDNREIVMKYIHYKLSQRGYEWDVGDVDAAPLGAAPTPGIFSFQPESNPTPAVHRDMAARTSPLRPIVATTGPTLSPVPPVVHLTLRRAGDDFSRRYRRDFAEMSSQLHLTPFTARGRFATVVEELFRDGVNWGRIVAFFEFGGVMCVESVNREMSPLVDNIALWMTEYLNRHLHTWIQDNGGWDAFVELYGPSVRPLFDFSWLSLKTLLSLALVGACITLGTYLGHK</sequence>
<keyword id="KW-0053">Apoptosis</keyword>
<keyword id="KW-0072">Autophagy</keyword>
<keyword id="KW-0963">Cytoplasm</keyword>
<keyword id="KW-0256">Endoplasmic reticulum</keyword>
<keyword id="KW-0472">Membrane</keyword>
<keyword id="KW-0496">Mitochondrion</keyword>
<keyword id="KW-1000">Mitochondrion outer membrane</keyword>
<keyword id="KW-0539">Nucleus</keyword>
<keyword id="KW-0597">Phosphoprotein</keyword>
<keyword id="KW-0812">Transmembrane</keyword>
<keyword id="KW-1133">Transmembrane helix</keyword>
<keyword id="KW-0832">Ubl conjugation</keyword>
<dbReference type="EMBL" id="AJ271720">
    <property type="protein sequence ID" value="CAB92245.1"/>
    <property type="molecule type" value="mRNA"/>
</dbReference>
<dbReference type="PIR" id="JC7383">
    <property type="entry name" value="JC7383"/>
</dbReference>
<dbReference type="SMR" id="Q9JJV8"/>
<dbReference type="IntAct" id="Q9JJV8">
    <property type="interactions" value="1"/>
</dbReference>
<dbReference type="PaxDb" id="10029-XP_007611354.1"/>
<dbReference type="Ensembl" id="ENSCGRT00001031574.1">
    <property type="protein sequence ID" value="ENSCGRP00001027327.1"/>
    <property type="gene ID" value="ENSCGRG00001024362.1"/>
</dbReference>
<dbReference type="eggNOG" id="KOG4728">
    <property type="taxonomic scope" value="Eukaryota"/>
</dbReference>
<dbReference type="GeneTree" id="ENSGT01130000278332"/>
<dbReference type="Proteomes" id="UP000694386">
    <property type="component" value="Unplaced"/>
</dbReference>
<dbReference type="Proteomes" id="UP001108280">
    <property type="component" value="Unplaced"/>
</dbReference>
<dbReference type="GO" id="GO:0097138">
    <property type="term" value="C:BAD-BCL-2 complex"/>
    <property type="evidence" value="ECO:0007669"/>
    <property type="project" value="Ensembl"/>
</dbReference>
<dbReference type="GO" id="GO:0005829">
    <property type="term" value="C:cytosol"/>
    <property type="evidence" value="ECO:0007669"/>
    <property type="project" value="Ensembl"/>
</dbReference>
<dbReference type="GO" id="GO:0005789">
    <property type="term" value="C:endoplasmic reticulum membrane"/>
    <property type="evidence" value="ECO:0000250"/>
    <property type="project" value="UniProtKB"/>
</dbReference>
<dbReference type="GO" id="GO:0005741">
    <property type="term" value="C:mitochondrial outer membrane"/>
    <property type="evidence" value="ECO:0000250"/>
    <property type="project" value="UniProtKB"/>
</dbReference>
<dbReference type="GO" id="GO:0043209">
    <property type="term" value="C:myelin sheath"/>
    <property type="evidence" value="ECO:0007669"/>
    <property type="project" value="Ensembl"/>
</dbReference>
<dbReference type="GO" id="GO:0031965">
    <property type="term" value="C:nuclear membrane"/>
    <property type="evidence" value="ECO:0007669"/>
    <property type="project" value="UniProtKB-SubCell"/>
</dbReference>
<dbReference type="GO" id="GO:0046930">
    <property type="term" value="C:pore complex"/>
    <property type="evidence" value="ECO:0007669"/>
    <property type="project" value="Ensembl"/>
</dbReference>
<dbReference type="GO" id="GO:0051434">
    <property type="term" value="F:BH3 domain binding"/>
    <property type="evidence" value="ECO:0007669"/>
    <property type="project" value="Ensembl"/>
</dbReference>
<dbReference type="GO" id="GO:0015267">
    <property type="term" value="F:channel activity"/>
    <property type="evidence" value="ECO:0007669"/>
    <property type="project" value="Ensembl"/>
</dbReference>
<dbReference type="GO" id="GO:0016248">
    <property type="term" value="F:channel inhibitor activity"/>
    <property type="evidence" value="ECO:0007669"/>
    <property type="project" value="Ensembl"/>
</dbReference>
<dbReference type="GO" id="GO:0140297">
    <property type="term" value="F:DNA-binding transcription factor binding"/>
    <property type="evidence" value="ECO:0007669"/>
    <property type="project" value="Ensembl"/>
</dbReference>
<dbReference type="GO" id="GO:0042802">
    <property type="term" value="F:identical protein binding"/>
    <property type="evidence" value="ECO:0007669"/>
    <property type="project" value="Ensembl"/>
</dbReference>
<dbReference type="GO" id="GO:0060090">
    <property type="term" value="F:molecular adaptor activity"/>
    <property type="evidence" value="ECO:0007669"/>
    <property type="project" value="Ensembl"/>
</dbReference>
<dbReference type="GO" id="GO:0002020">
    <property type="term" value="F:protease binding"/>
    <property type="evidence" value="ECO:0007669"/>
    <property type="project" value="Ensembl"/>
</dbReference>
<dbReference type="GO" id="GO:0046982">
    <property type="term" value="F:protein heterodimerization activity"/>
    <property type="evidence" value="ECO:0007669"/>
    <property type="project" value="Ensembl"/>
</dbReference>
<dbReference type="GO" id="GO:0051721">
    <property type="term" value="F:protein phosphatase 2A binding"/>
    <property type="evidence" value="ECO:0007669"/>
    <property type="project" value="Ensembl"/>
</dbReference>
<dbReference type="GO" id="GO:0043565">
    <property type="term" value="F:sequence-specific DNA binding"/>
    <property type="evidence" value="ECO:0007669"/>
    <property type="project" value="Ensembl"/>
</dbReference>
<dbReference type="GO" id="GO:0031625">
    <property type="term" value="F:ubiquitin protein ligase binding"/>
    <property type="evidence" value="ECO:0007669"/>
    <property type="project" value="Ensembl"/>
</dbReference>
<dbReference type="GO" id="GO:0007015">
    <property type="term" value="P:actin filament organization"/>
    <property type="evidence" value="ECO:0007669"/>
    <property type="project" value="Ensembl"/>
</dbReference>
<dbReference type="GO" id="GO:0006914">
    <property type="term" value="P:autophagy"/>
    <property type="evidence" value="ECO:0007669"/>
    <property type="project" value="UniProtKB-KW"/>
</dbReference>
<dbReference type="GO" id="GO:0031103">
    <property type="term" value="P:axon regeneration"/>
    <property type="evidence" value="ECO:0007669"/>
    <property type="project" value="Ensembl"/>
</dbReference>
<dbReference type="GO" id="GO:0007409">
    <property type="term" value="P:axonogenesis"/>
    <property type="evidence" value="ECO:0007669"/>
    <property type="project" value="Ensembl"/>
</dbReference>
<dbReference type="GO" id="GO:0001783">
    <property type="term" value="P:B cell apoptotic process"/>
    <property type="evidence" value="ECO:0007669"/>
    <property type="project" value="Ensembl"/>
</dbReference>
<dbReference type="GO" id="GO:0001782">
    <property type="term" value="P:B cell homeostasis"/>
    <property type="evidence" value="ECO:0007669"/>
    <property type="project" value="Ensembl"/>
</dbReference>
<dbReference type="GO" id="GO:0002326">
    <property type="term" value="P:B cell lineage commitment"/>
    <property type="evidence" value="ECO:0007669"/>
    <property type="project" value="Ensembl"/>
</dbReference>
<dbReference type="GO" id="GO:0042100">
    <property type="term" value="P:B cell proliferation"/>
    <property type="evidence" value="ECO:0007669"/>
    <property type="project" value="Ensembl"/>
</dbReference>
<dbReference type="GO" id="GO:0050853">
    <property type="term" value="P:B cell receptor signaling pathway"/>
    <property type="evidence" value="ECO:0007669"/>
    <property type="project" value="Ensembl"/>
</dbReference>
<dbReference type="GO" id="GO:0001662">
    <property type="term" value="P:behavioral fear response"/>
    <property type="evidence" value="ECO:0007669"/>
    <property type="project" value="Ensembl"/>
</dbReference>
<dbReference type="GO" id="GO:0001658">
    <property type="term" value="P:branching involved in ureteric bud morphogenesis"/>
    <property type="evidence" value="ECO:0007669"/>
    <property type="project" value="Ensembl"/>
</dbReference>
<dbReference type="GO" id="GO:0060402">
    <property type="term" value="P:calcium ion transport into cytosol"/>
    <property type="evidence" value="ECO:0007669"/>
    <property type="project" value="Ensembl"/>
</dbReference>
<dbReference type="GO" id="GO:0043375">
    <property type="term" value="P:CD8-positive, alpha-beta T cell lineage commitment"/>
    <property type="evidence" value="ECO:0007669"/>
    <property type="project" value="Ensembl"/>
</dbReference>
<dbReference type="GO" id="GO:0098609">
    <property type="term" value="P:cell-cell adhesion"/>
    <property type="evidence" value="ECO:0007669"/>
    <property type="project" value="Ensembl"/>
</dbReference>
<dbReference type="GO" id="GO:0042149">
    <property type="term" value="P:cellular response to glucose starvation"/>
    <property type="evidence" value="ECO:0007669"/>
    <property type="project" value="Ensembl"/>
</dbReference>
<dbReference type="GO" id="GO:0071456">
    <property type="term" value="P:cellular response to hypoxia"/>
    <property type="evidence" value="ECO:0007669"/>
    <property type="project" value="Ensembl"/>
</dbReference>
<dbReference type="GO" id="GO:0021747">
    <property type="term" value="P:cochlear nucleus development"/>
    <property type="evidence" value="ECO:0007669"/>
    <property type="project" value="Ensembl"/>
</dbReference>
<dbReference type="GO" id="GO:0051607">
    <property type="term" value="P:defense response to virus"/>
    <property type="evidence" value="ECO:0007669"/>
    <property type="project" value="Ensembl"/>
</dbReference>
<dbReference type="GO" id="GO:0097048">
    <property type="term" value="P:dendritic cell apoptotic process"/>
    <property type="evidence" value="ECO:0007669"/>
    <property type="project" value="Ensembl"/>
</dbReference>
<dbReference type="GO" id="GO:0048546">
    <property type="term" value="P:digestive tract morphogenesis"/>
    <property type="evidence" value="ECO:0007669"/>
    <property type="project" value="Ensembl"/>
</dbReference>
<dbReference type="GO" id="GO:0043583">
    <property type="term" value="P:ear development"/>
    <property type="evidence" value="ECO:0007669"/>
    <property type="project" value="Ensembl"/>
</dbReference>
<dbReference type="GO" id="GO:0032469">
    <property type="term" value="P:endoplasmic reticulum calcium ion homeostasis"/>
    <property type="evidence" value="ECO:0007669"/>
    <property type="project" value="Ensembl"/>
</dbReference>
<dbReference type="GO" id="GO:1904019">
    <property type="term" value="P:epithelial cell apoptotic process"/>
    <property type="evidence" value="ECO:0007669"/>
    <property type="project" value="Ensembl"/>
</dbReference>
<dbReference type="GO" id="GO:0051649">
    <property type="term" value="P:establishment of localization in cell"/>
    <property type="evidence" value="ECO:0007669"/>
    <property type="project" value="Ensembl"/>
</dbReference>
<dbReference type="GO" id="GO:0097192">
    <property type="term" value="P:extrinsic apoptotic signaling pathway in absence of ligand"/>
    <property type="evidence" value="ECO:0007669"/>
    <property type="project" value="Ensembl"/>
</dbReference>
<dbReference type="GO" id="GO:0008625">
    <property type="term" value="P:extrinsic apoptotic signaling pathway via death domain receptors"/>
    <property type="evidence" value="ECO:0007669"/>
    <property type="project" value="Ensembl"/>
</dbReference>
<dbReference type="GO" id="GO:0048041">
    <property type="term" value="P:focal adhesion assembly"/>
    <property type="evidence" value="ECO:0007669"/>
    <property type="project" value="Ensembl"/>
</dbReference>
<dbReference type="GO" id="GO:0000082">
    <property type="term" value="P:G1/S transition of mitotic cell cycle"/>
    <property type="evidence" value="ECO:0007669"/>
    <property type="project" value="Ensembl"/>
</dbReference>
<dbReference type="GO" id="GO:0022612">
    <property type="term" value="P:gland morphogenesis"/>
    <property type="evidence" value="ECO:0007669"/>
    <property type="project" value="Ensembl"/>
</dbReference>
<dbReference type="GO" id="GO:0032835">
    <property type="term" value="P:glomerulus development"/>
    <property type="evidence" value="ECO:0007669"/>
    <property type="project" value="Ensembl"/>
</dbReference>
<dbReference type="GO" id="GO:0031069">
    <property type="term" value="P:hair follicle morphogenesis"/>
    <property type="evidence" value="ECO:0007669"/>
    <property type="project" value="Ensembl"/>
</dbReference>
<dbReference type="GO" id="GO:0060218">
    <property type="term" value="P:hematopoietic stem cell differentiation"/>
    <property type="evidence" value="ECO:0007669"/>
    <property type="project" value="Ensembl"/>
</dbReference>
<dbReference type="GO" id="GO:0048873">
    <property type="term" value="P:homeostasis of number of cells within a tissue"/>
    <property type="evidence" value="ECO:0007669"/>
    <property type="project" value="Ensembl"/>
</dbReference>
<dbReference type="GO" id="GO:0008630">
    <property type="term" value="P:intrinsic apoptotic signaling pathway in response to DNA damage"/>
    <property type="evidence" value="ECO:0007669"/>
    <property type="project" value="Ensembl"/>
</dbReference>
<dbReference type="GO" id="GO:0070059">
    <property type="term" value="P:intrinsic apoptotic signaling pathway in response to endoplasmic reticulum stress"/>
    <property type="evidence" value="ECO:0007669"/>
    <property type="project" value="Ensembl"/>
</dbReference>
<dbReference type="GO" id="GO:0008631">
    <property type="term" value="P:intrinsic apoptotic signaling pathway in response to oxidative stress"/>
    <property type="evidence" value="ECO:0007669"/>
    <property type="project" value="Ensembl"/>
</dbReference>
<dbReference type="GO" id="GO:0002320">
    <property type="term" value="P:lymphoid progenitor cell differentiation"/>
    <property type="evidence" value="ECO:0007669"/>
    <property type="project" value="Ensembl"/>
</dbReference>
<dbReference type="GO" id="GO:0008584">
    <property type="term" value="P:male gonad development"/>
    <property type="evidence" value="ECO:0007669"/>
    <property type="project" value="Ensembl"/>
</dbReference>
<dbReference type="GO" id="GO:0006582">
    <property type="term" value="P:melanin metabolic process"/>
    <property type="evidence" value="ECO:0007669"/>
    <property type="project" value="Ensembl"/>
</dbReference>
<dbReference type="GO" id="GO:0030318">
    <property type="term" value="P:melanocyte differentiation"/>
    <property type="evidence" value="ECO:0007669"/>
    <property type="project" value="Ensembl"/>
</dbReference>
<dbReference type="GO" id="GO:0014031">
    <property type="term" value="P:mesenchymal cell development"/>
    <property type="evidence" value="ECO:0007669"/>
    <property type="project" value="Ensembl"/>
</dbReference>
<dbReference type="GO" id="GO:0001656">
    <property type="term" value="P:metanephros development"/>
    <property type="evidence" value="ECO:0007669"/>
    <property type="project" value="Ensembl"/>
</dbReference>
<dbReference type="GO" id="GO:0097049">
    <property type="term" value="P:motor neuron apoptotic process"/>
    <property type="evidence" value="ECO:0007669"/>
    <property type="project" value="Ensembl"/>
</dbReference>
<dbReference type="GO" id="GO:0033028">
    <property type="term" value="P:myeloid cell apoptotic process"/>
    <property type="evidence" value="ECO:0007669"/>
    <property type="project" value="Ensembl"/>
</dbReference>
<dbReference type="GO" id="GO:2000811">
    <property type="term" value="P:negative regulation of anoikis"/>
    <property type="evidence" value="ECO:0007669"/>
    <property type="project" value="Ensembl"/>
</dbReference>
<dbReference type="GO" id="GO:0010507">
    <property type="term" value="P:negative regulation of autophagy"/>
    <property type="evidence" value="ECO:0000250"/>
    <property type="project" value="UniProtKB"/>
</dbReference>
<dbReference type="GO" id="GO:0002903">
    <property type="term" value="P:negative regulation of B cell apoptotic process"/>
    <property type="evidence" value="ECO:0007669"/>
    <property type="project" value="Ensembl"/>
</dbReference>
<dbReference type="GO" id="GO:0010523">
    <property type="term" value="P:negative regulation of calcium ion transport into cytosol"/>
    <property type="evidence" value="ECO:0007669"/>
    <property type="project" value="Ensembl"/>
</dbReference>
<dbReference type="GO" id="GO:0030308">
    <property type="term" value="P:negative regulation of cell growth"/>
    <property type="evidence" value="ECO:0007669"/>
    <property type="project" value="Ensembl"/>
</dbReference>
<dbReference type="GO" id="GO:0030336">
    <property type="term" value="P:negative regulation of cell migration"/>
    <property type="evidence" value="ECO:0007669"/>
    <property type="project" value="Ensembl"/>
</dbReference>
<dbReference type="GO" id="GO:0032848">
    <property type="term" value="P:negative regulation of cellular pH reduction"/>
    <property type="evidence" value="ECO:0007669"/>
    <property type="project" value="Ensembl"/>
</dbReference>
<dbReference type="GO" id="GO:2000669">
    <property type="term" value="P:negative regulation of dendritic cell apoptotic process"/>
    <property type="evidence" value="ECO:0007669"/>
    <property type="project" value="Ensembl"/>
</dbReference>
<dbReference type="GO" id="GO:1904036">
    <property type="term" value="P:negative regulation of epithelial cell apoptotic process"/>
    <property type="evidence" value="ECO:0007669"/>
    <property type="project" value="Ensembl"/>
</dbReference>
<dbReference type="GO" id="GO:2001240">
    <property type="term" value="P:negative regulation of extrinsic apoptotic signaling pathway in absence of ligand"/>
    <property type="evidence" value="ECO:0007669"/>
    <property type="project" value="Ensembl"/>
</dbReference>
<dbReference type="GO" id="GO:2000134">
    <property type="term" value="P:negative regulation of G1/S transition of mitotic cell cycle"/>
    <property type="evidence" value="ECO:0007669"/>
    <property type="project" value="Ensembl"/>
</dbReference>
<dbReference type="GO" id="GO:2001243">
    <property type="term" value="P:negative regulation of intrinsic apoptotic signaling pathway"/>
    <property type="evidence" value="ECO:0007669"/>
    <property type="project" value="Ensembl"/>
</dbReference>
<dbReference type="GO" id="GO:2000672">
    <property type="term" value="P:negative regulation of motor neuron apoptotic process"/>
    <property type="evidence" value="ECO:0007669"/>
    <property type="project" value="Ensembl"/>
</dbReference>
<dbReference type="GO" id="GO:0033033">
    <property type="term" value="P:negative regulation of myeloid cell apoptotic process"/>
    <property type="evidence" value="ECO:0007669"/>
    <property type="project" value="Ensembl"/>
</dbReference>
<dbReference type="GO" id="GO:0030279">
    <property type="term" value="P:negative regulation of ossification"/>
    <property type="evidence" value="ECO:0007669"/>
    <property type="project" value="Ensembl"/>
</dbReference>
<dbReference type="GO" id="GO:0033689">
    <property type="term" value="P:negative regulation of osteoblast proliferation"/>
    <property type="evidence" value="ECO:0007669"/>
    <property type="project" value="Ensembl"/>
</dbReference>
<dbReference type="GO" id="GO:0046671">
    <property type="term" value="P:negative regulation of retinal cell programmed cell death"/>
    <property type="evidence" value="ECO:0007669"/>
    <property type="project" value="Ensembl"/>
</dbReference>
<dbReference type="GO" id="GO:0070233">
    <property type="term" value="P:negative regulation of T cell apoptotic process"/>
    <property type="evidence" value="ECO:0007669"/>
    <property type="project" value="Ensembl"/>
</dbReference>
<dbReference type="GO" id="GO:0042551">
    <property type="term" value="P:neuron maturation"/>
    <property type="evidence" value="ECO:0007669"/>
    <property type="project" value="Ensembl"/>
</dbReference>
<dbReference type="GO" id="GO:0048599">
    <property type="term" value="P:oocyte development"/>
    <property type="evidence" value="ECO:0007669"/>
    <property type="project" value="Ensembl"/>
</dbReference>
<dbReference type="GO" id="GO:0035265">
    <property type="term" value="P:organ growth"/>
    <property type="evidence" value="ECO:0007669"/>
    <property type="project" value="Ensembl"/>
</dbReference>
<dbReference type="GO" id="GO:0001503">
    <property type="term" value="P:ossification"/>
    <property type="evidence" value="ECO:0007669"/>
    <property type="project" value="Ensembl"/>
</dbReference>
<dbReference type="GO" id="GO:0033687">
    <property type="term" value="P:osteoblast proliferation"/>
    <property type="evidence" value="ECO:0007669"/>
    <property type="project" value="Ensembl"/>
</dbReference>
<dbReference type="GO" id="GO:0001541">
    <property type="term" value="P:ovarian follicle development"/>
    <property type="evidence" value="ECO:0007669"/>
    <property type="project" value="Ensembl"/>
</dbReference>
<dbReference type="GO" id="GO:0048753">
    <property type="term" value="P:pigment granule organization"/>
    <property type="evidence" value="ECO:0007669"/>
    <property type="project" value="Ensembl"/>
</dbReference>
<dbReference type="GO" id="GO:0030890">
    <property type="term" value="P:positive regulation of B cell proliferation"/>
    <property type="evidence" value="ECO:0007669"/>
    <property type="project" value="Ensembl"/>
</dbReference>
<dbReference type="GO" id="GO:0030307">
    <property type="term" value="P:positive regulation of cell growth"/>
    <property type="evidence" value="ECO:0007669"/>
    <property type="project" value="Ensembl"/>
</dbReference>
<dbReference type="GO" id="GO:0045636">
    <property type="term" value="P:positive regulation of melanocyte differentiation"/>
    <property type="evidence" value="ECO:0007669"/>
    <property type="project" value="Ensembl"/>
</dbReference>
<dbReference type="GO" id="GO:0040018">
    <property type="term" value="P:positive regulation of multicellular organism growth"/>
    <property type="evidence" value="ECO:0007669"/>
    <property type="project" value="Ensembl"/>
</dbReference>
<dbReference type="GO" id="GO:0014042">
    <property type="term" value="P:positive regulation of neuron maturation"/>
    <property type="evidence" value="ECO:0007669"/>
    <property type="project" value="Ensembl"/>
</dbReference>
<dbReference type="GO" id="GO:0048743">
    <property type="term" value="P:positive regulation of skeletal muscle fiber development"/>
    <property type="evidence" value="ECO:0007669"/>
    <property type="project" value="Ensembl"/>
</dbReference>
<dbReference type="GO" id="GO:0014911">
    <property type="term" value="P:positive regulation of smooth muscle cell migration"/>
    <property type="evidence" value="ECO:0007669"/>
    <property type="project" value="Ensembl"/>
</dbReference>
<dbReference type="GO" id="GO:0009791">
    <property type="term" value="P:post-embryonic development"/>
    <property type="evidence" value="ECO:0007669"/>
    <property type="project" value="Ensembl"/>
</dbReference>
<dbReference type="GO" id="GO:0000209">
    <property type="term" value="P:protein polyubiquitination"/>
    <property type="evidence" value="ECO:0007669"/>
    <property type="project" value="Ensembl"/>
</dbReference>
<dbReference type="GO" id="GO:0072593">
    <property type="term" value="P:reactive oxygen species metabolic process"/>
    <property type="evidence" value="ECO:0007669"/>
    <property type="project" value="Ensembl"/>
</dbReference>
<dbReference type="GO" id="GO:0001952">
    <property type="term" value="P:regulation of cell-matrix adhesion"/>
    <property type="evidence" value="ECO:0007669"/>
    <property type="project" value="Ensembl"/>
</dbReference>
<dbReference type="GO" id="GO:0010468">
    <property type="term" value="P:regulation of gene expression"/>
    <property type="evidence" value="ECO:0007669"/>
    <property type="project" value="Ensembl"/>
</dbReference>
<dbReference type="GO" id="GO:0010559">
    <property type="term" value="P:regulation of glycoprotein biosynthetic process"/>
    <property type="evidence" value="ECO:0007669"/>
    <property type="project" value="Ensembl"/>
</dbReference>
<dbReference type="GO" id="GO:0046902">
    <property type="term" value="P:regulation of mitochondrial membrane permeability"/>
    <property type="evidence" value="ECO:0007669"/>
    <property type="project" value="Ensembl"/>
</dbReference>
<dbReference type="GO" id="GO:0051881">
    <property type="term" value="P:regulation of mitochondrial membrane potential"/>
    <property type="evidence" value="ECO:0007669"/>
    <property type="project" value="Ensembl"/>
</dbReference>
<dbReference type="GO" id="GO:0006808">
    <property type="term" value="P:regulation of nitrogen utilization"/>
    <property type="evidence" value="ECO:0007669"/>
    <property type="project" value="Ensembl"/>
</dbReference>
<dbReference type="GO" id="GO:0032880">
    <property type="term" value="P:regulation of protein localization"/>
    <property type="evidence" value="ECO:0007669"/>
    <property type="project" value="Ensembl"/>
</dbReference>
<dbReference type="GO" id="GO:0031647">
    <property type="term" value="P:regulation of protein stability"/>
    <property type="evidence" value="ECO:0007669"/>
    <property type="project" value="Ensembl"/>
</dbReference>
<dbReference type="GO" id="GO:0045069">
    <property type="term" value="P:regulation of viral genome replication"/>
    <property type="evidence" value="ECO:0007669"/>
    <property type="project" value="Ensembl"/>
</dbReference>
<dbReference type="GO" id="GO:0001836">
    <property type="term" value="P:release of cytochrome c from mitochondria"/>
    <property type="evidence" value="ECO:0007669"/>
    <property type="project" value="Ensembl"/>
</dbReference>
<dbReference type="GO" id="GO:0003014">
    <property type="term" value="P:renal system process"/>
    <property type="evidence" value="ECO:0007669"/>
    <property type="project" value="Ensembl"/>
</dbReference>
<dbReference type="GO" id="GO:0034097">
    <property type="term" value="P:response to cytokine"/>
    <property type="evidence" value="ECO:0007669"/>
    <property type="project" value="Ensembl"/>
</dbReference>
<dbReference type="GO" id="GO:0010332">
    <property type="term" value="P:response to gamma radiation"/>
    <property type="evidence" value="ECO:0007669"/>
    <property type="project" value="Ensembl"/>
</dbReference>
<dbReference type="GO" id="GO:0051384">
    <property type="term" value="P:response to glucocorticoid"/>
    <property type="evidence" value="ECO:0007669"/>
    <property type="project" value="Ensembl"/>
</dbReference>
<dbReference type="GO" id="GO:0042542">
    <property type="term" value="P:response to hydrogen peroxide"/>
    <property type="evidence" value="ECO:0007669"/>
    <property type="project" value="Ensembl"/>
</dbReference>
<dbReference type="GO" id="GO:0010039">
    <property type="term" value="P:response to iron ion"/>
    <property type="evidence" value="ECO:0007669"/>
    <property type="project" value="Ensembl"/>
</dbReference>
<dbReference type="GO" id="GO:0002931">
    <property type="term" value="P:response to ischemia"/>
    <property type="evidence" value="ECO:0007669"/>
    <property type="project" value="Ensembl"/>
</dbReference>
<dbReference type="GO" id="GO:0035094">
    <property type="term" value="P:response to nicotine"/>
    <property type="evidence" value="ECO:0007669"/>
    <property type="project" value="Ensembl"/>
</dbReference>
<dbReference type="GO" id="GO:0009636">
    <property type="term" value="P:response to toxic substance"/>
    <property type="evidence" value="ECO:0007669"/>
    <property type="project" value="Ensembl"/>
</dbReference>
<dbReference type="GO" id="GO:0010224">
    <property type="term" value="P:response to UV-B"/>
    <property type="evidence" value="ECO:0007669"/>
    <property type="project" value="Ensembl"/>
</dbReference>
<dbReference type="GO" id="GO:0009410">
    <property type="term" value="P:response to xenobiotic stimulus"/>
    <property type="evidence" value="ECO:0007669"/>
    <property type="project" value="Ensembl"/>
</dbReference>
<dbReference type="GO" id="GO:0046666">
    <property type="term" value="P:retinal cell programmed cell death"/>
    <property type="evidence" value="ECO:0007669"/>
    <property type="project" value="Ensembl"/>
</dbReference>
<dbReference type="GO" id="GO:0048741">
    <property type="term" value="P:skeletal muscle fiber development"/>
    <property type="evidence" value="ECO:0007669"/>
    <property type="project" value="Ensembl"/>
</dbReference>
<dbReference type="GO" id="GO:0014909">
    <property type="term" value="P:smooth muscle cell migration"/>
    <property type="evidence" value="ECO:0007669"/>
    <property type="project" value="Ensembl"/>
</dbReference>
<dbReference type="GO" id="GO:0048536">
    <property type="term" value="P:spleen development"/>
    <property type="evidence" value="ECO:0007669"/>
    <property type="project" value="Ensembl"/>
</dbReference>
<dbReference type="GO" id="GO:0048864">
    <property type="term" value="P:stem cell development"/>
    <property type="evidence" value="ECO:0007669"/>
    <property type="project" value="Ensembl"/>
</dbReference>
<dbReference type="GO" id="GO:0070231">
    <property type="term" value="P:T cell apoptotic process"/>
    <property type="evidence" value="ECO:0007669"/>
    <property type="project" value="Ensembl"/>
</dbReference>
<dbReference type="GO" id="GO:0033077">
    <property type="term" value="P:T cell differentiation in thymus"/>
    <property type="evidence" value="ECO:0007669"/>
    <property type="project" value="Ensembl"/>
</dbReference>
<dbReference type="GO" id="GO:0043029">
    <property type="term" value="P:T cell homeostasis"/>
    <property type="evidence" value="ECO:0007669"/>
    <property type="project" value="Ensembl"/>
</dbReference>
<dbReference type="GO" id="GO:0048538">
    <property type="term" value="P:thymus development"/>
    <property type="evidence" value="ECO:0007669"/>
    <property type="project" value="Ensembl"/>
</dbReference>
<dbReference type="CDD" id="cd06845">
    <property type="entry name" value="Bcl-2_like"/>
    <property type="match status" value="1"/>
</dbReference>
<dbReference type="FunFam" id="1.10.437.10:FF:000006">
    <property type="entry name" value="Apoptosis regulator Bcl-2"/>
    <property type="match status" value="1"/>
</dbReference>
<dbReference type="Gene3D" id="1.10.437.10">
    <property type="entry name" value="Blc2-like"/>
    <property type="match status" value="1"/>
</dbReference>
<dbReference type="InterPro" id="IPR013278">
    <property type="entry name" value="Apop_reg_Bcl2"/>
</dbReference>
<dbReference type="InterPro" id="IPR036834">
    <property type="entry name" value="Bcl-2-like_sf"/>
</dbReference>
<dbReference type="InterPro" id="IPR046371">
    <property type="entry name" value="Bcl-2_BH1-3"/>
</dbReference>
<dbReference type="InterPro" id="IPR026298">
    <property type="entry name" value="Bcl-2_fam"/>
</dbReference>
<dbReference type="InterPro" id="IPR002475">
    <property type="entry name" value="Bcl2-like"/>
</dbReference>
<dbReference type="InterPro" id="IPR004725">
    <property type="entry name" value="Bcl2/BclX"/>
</dbReference>
<dbReference type="InterPro" id="IPR020717">
    <property type="entry name" value="Bcl2_BH1_motif_CS"/>
</dbReference>
<dbReference type="InterPro" id="IPR020726">
    <property type="entry name" value="Bcl2_BH2_motif_CS"/>
</dbReference>
<dbReference type="InterPro" id="IPR020728">
    <property type="entry name" value="Bcl2_BH3_motif_CS"/>
</dbReference>
<dbReference type="InterPro" id="IPR003093">
    <property type="entry name" value="Bcl2_BH4"/>
</dbReference>
<dbReference type="InterPro" id="IPR020731">
    <property type="entry name" value="Bcl2_BH4_motif_CS"/>
</dbReference>
<dbReference type="NCBIfam" id="TIGR00865">
    <property type="entry name" value="bcl-2"/>
    <property type="match status" value="1"/>
</dbReference>
<dbReference type="PANTHER" id="PTHR11256:SF11">
    <property type="entry name" value="APOPTOSIS REGULATOR BCL-2"/>
    <property type="match status" value="1"/>
</dbReference>
<dbReference type="PANTHER" id="PTHR11256">
    <property type="entry name" value="BCL-2 RELATED"/>
    <property type="match status" value="1"/>
</dbReference>
<dbReference type="Pfam" id="PF00452">
    <property type="entry name" value="Bcl-2"/>
    <property type="match status" value="1"/>
</dbReference>
<dbReference type="Pfam" id="PF02180">
    <property type="entry name" value="BH4"/>
    <property type="match status" value="1"/>
</dbReference>
<dbReference type="PRINTS" id="PR01863">
    <property type="entry name" value="APOPREGBCL2"/>
</dbReference>
<dbReference type="PRINTS" id="PR01862">
    <property type="entry name" value="BCL2FAMILY"/>
</dbReference>
<dbReference type="SMART" id="SM00337">
    <property type="entry name" value="BCL"/>
    <property type="match status" value="1"/>
</dbReference>
<dbReference type="SMART" id="SM00265">
    <property type="entry name" value="BH4"/>
    <property type="match status" value="1"/>
</dbReference>
<dbReference type="SUPFAM" id="SSF56854">
    <property type="entry name" value="Bcl-2 inhibitors of programmed cell death"/>
    <property type="match status" value="1"/>
</dbReference>
<dbReference type="PROSITE" id="PS50062">
    <property type="entry name" value="BCL2_FAMILY"/>
    <property type="match status" value="1"/>
</dbReference>
<dbReference type="PROSITE" id="PS01080">
    <property type="entry name" value="BH1"/>
    <property type="match status" value="1"/>
</dbReference>
<dbReference type="PROSITE" id="PS01258">
    <property type="entry name" value="BH2"/>
    <property type="match status" value="1"/>
</dbReference>
<dbReference type="PROSITE" id="PS01259">
    <property type="entry name" value="BH3"/>
    <property type="match status" value="1"/>
</dbReference>
<dbReference type="PROSITE" id="PS01260">
    <property type="entry name" value="BH4_1"/>
    <property type="match status" value="1"/>
</dbReference>
<dbReference type="PROSITE" id="PS50063">
    <property type="entry name" value="BH4_2"/>
    <property type="match status" value="1"/>
</dbReference>
<gene>
    <name type="primary">BCL2</name>
</gene>
<name>BCL2_CRIGR</name>
<feature type="chain" id="PRO_0000143047" description="Apoptosis regulator Bcl-2">
    <location>
        <begin position="1"/>
        <end position="236"/>
    </location>
</feature>
<feature type="transmembrane region" description="Helical" evidence="4">
    <location>
        <begin position="209"/>
        <end position="230"/>
    </location>
</feature>
<feature type="short sequence motif" description="BH4">
    <location>
        <begin position="10"/>
        <end position="30"/>
    </location>
</feature>
<feature type="short sequence motif" description="BH3">
    <location>
        <begin position="90"/>
        <end position="104"/>
    </location>
</feature>
<feature type="short sequence motif" description="BH1">
    <location>
        <begin position="133"/>
        <end position="152"/>
    </location>
</feature>
<feature type="short sequence motif" description="BH2">
    <location>
        <begin position="184"/>
        <end position="199"/>
    </location>
</feature>
<feature type="site" description="Cleavage; by caspase-3 and caspase-9">
    <location>
        <begin position="64"/>
        <end position="65"/>
    </location>
</feature>
<feature type="modified residue" description="Phosphothreonine; by MAPK8" evidence="2">
    <location>
        <position position="69"/>
    </location>
</feature>
<feature type="modified residue" description="Phosphoserine; by MAPK8 and PKC" evidence="2">
    <location>
        <position position="70"/>
    </location>
</feature>
<feature type="modified residue" description="Phosphoserine; by MAPK8" evidence="2">
    <location>
        <position position="84"/>
    </location>
</feature>
<evidence type="ECO:0000250" key="1"/>
<evidence type="ECO:0000250" key="2">
    <source>
        <dbReference type="UniProtKB" id="P10415"/>
    </source>
</evidence>
<evidence type="ECO:0000250" key="3">
    <source>
        <dbReference type="UniProtKB" id="P10417"/>
    </source>
</evidence>
<evidence type="ECO:0000255" key="4"/>
<evidence type="ECO:0000269" key="5">
    <source>
    </source>
</evidence>
<evidence type="ECO:0000305" key="6"/>